<protein>
    <recommendedName>
        <fullName>Protein MobD</fullName>
    </recommendedName>
</protein>
<organism>
    <name type="scientific">Acidithiobacillus ferrooxidans</name>
    <name type="common">Thiobacillus ferrooxidans</name>
    <dbReference type="NCBI Taxonomy" id="920"/>
    <lineage>
        <taxon>Bacteria</taxon>
        <taxon>Pseudomonadati</taxon>
        <taxon>Pseudomonadota</taxon>
        <taxon>Acidithiobacillia</taxon>
        <taxon>Acidithiobacillales</taxon>
        <taxon>Acidithiobacillaceae</taxon>
        <taxon>Acidithiobacillus</taxon>
    </lineage>
</organism>
<geneLocation type="plasmid">
    <name>pTF-FC2</name>
</geneLocation>
<dbReference type="EMBL" id="M57717">
    <property type="protein sequence ID" value="AAA27391.1"/>
    <property type="molecule type" value="Genomic_DNA"/>
</dbReference>
<dbReference type="PIR" id="D43256">
    <property type="entry name" value="D43256"/>
</dbReference>
<dbReference type="Gene3D" id="3.40.50.300">
    <property type="entry name" value="P-loop containing nucleotide triphosphate hydrolases"/>
    <property type="match status" value="1"/>
</dbReference>
<dbReference type="InterPro" id="IPR002586">
    <property type="entry name" value="CobQ/CobB/MinD/ParA_Nub-bd_dom"/>
</dbReference>
<dbReference type="InterPro" id="IPR027417">
    <property type="entry name" value="P-loop_NTPase"/>
</dbReference>
<dbReference type="Pfam" id="PF01656">
    <property type="entry name" value="CbiA"/>
    <property type="match status" value="1"/>
</dbReference>
<dbReference type="SUPFAM" id="SSF52540">
    <property type="entry name" value="P-loop containing nucleoside triphosphate hydrolases"/>
    <property type="match status" value="1"/>
</dbReference>
<accession>P22900</accession>
<gene>
    <name type="primary">mobD</name>
</gene>
<feature type="chain" id="PRO_0000068398" description="Protein MobD">
    <location>
        <begin position="1"/>
        <end position="227"/>
    </location>
</feature>
<name>MOBD_ACIFR</name>
<proteinExistence type="predicted"/>
<keyword id="KW-0614">Plasmid</keyword>
<reference key="1">
    <citation type="journal article" date="1992" name="J. Bacteriol.">
        <title>Sequence analysis and characterization of the mobilization region of a broad-host-range plasmid, pTF-FC2, isolated from Thiobacillus ferrooxidans.</title>
        <authorList>
            <person name="Rohrer J."/>
            <person name="Rawlings D.E."/>
        </authorList>
    </citation>
    <scope>NUCLEOTIDE SEQUENCE [GENOMIC DNA]</scope>
</reference>
<sequence length="227" mass="25303">MAKSIYLIGGSKGGVGKSLVTMATVDYLQERGESVLLIESDTSNPDVWKAYKESTETELINLDEADGWIQLVNLCDSKPDSVVVINAAARNNKGVSAYGETLNSTLAELKRKLVTLWVINRQRDSLELLKEYMDAIPNADVHVVRNGHFGEEKKFELYNGSKLRTAVEERGGQSVTFPDMADRVSDDIYSKRMSISVALKELPIGNRAELTRWRNEAKKVLEGVIHE</sequence>